<name>PPA29_ARATH</name>
<keyword id="KW-0325">Glycoprotein</keyword>
<keyword id="KW-0408">Iron</keyword>
<keyword id="KW-0479">Metal-binding</keyword>
<keyword id="KW-1185">Reference proteome</keyword>
<keyword id="KW-0964">Secreted</keyword>
<keyword id="KW-0732">Signal</keyword>
<keyword id="KW-0862">Zinc</keyword>
<proteinExistence type="evidence at transcript level"/>
<gene>
    <name type="primary">PAP29</name>
    <name type="ordered locus">At5g63140</name>
    <name type="ORF">MDC12.10</name>
</gene>
<sequence length="389" mass="43548">MADNRRRRSLFDFLLFSVFLGLACLCLSPIPATAQRRKLRFSVNGEFKILQVADMHFANGAKTQCQNVLPSQRAHCSDLNTTIFMSRVIAAEKPDLIVFTGDNIFGFDVKDALKSINAAFAPAIASKIPWVAILGNHDQESTFTRQQVMNHIVKLPNTLSQVNPPEAAHYIDGFGNYNLQIHGAADSKLQNKSVLNLYFLDSGDYSSVPYMEGYDWIKTSQQFWFDRTSKRLKREYNAKPNPQEGIAPGLAYFHIPLPEFLSFDSKNATKGVRQEGTSAASTNSGFFTTLIARGDVKSVFVGHDHVNDFCGELKGLNLCYGGGFGYHAYGKAGWERRARVVVVDLNKKRKGKWGAVKSIKTWKRLDDKHLSVIDSQVLWNNSANKLVVR</sequence>
<accession>Q9FMK9</accession>
<comment type="cofactor">
    <cofactor evidence="1">
        <name>Fe cation</name>
        <dbReference type="ChEBI" id="CHEBI:24875"/>
    </cofactor>
    <text evidence="1">Binds 1 Fe cation per subunit.</text>
</comment>
<comment type="cofactor">
    <cofactor evidence="1">
        <name>Zn(2+)</name>
        <dbReference type="ChEBI" id="CHEBI:29105"/>
    </cofactor>
    <text evidence="1">Binds 1 zinc ion per subunit.</text>
</comment>
<comment type="subunit">
    <text evidence="1">Homodimer.</text>
</comment>
<comment type="subcellular location">
    <subcellularLocation>
        <location evidence="1">Secreted</location>
    </subcellularLocation>
</comment>
<comment type="tissue specificity">
    <text evidence="3">Expressed in roots, stems, leaves, flowers and siliques.</text>
</comment>
<comment type="similarity">
    <text evidence="4">Belongs to the metallophosphoesterase superfamily. Purple acid phosphatase family.</text>
</comment>
<comment type="caution">
    <text evidence="4">Lacks the conserved His residue essential for phosphatase activity. Its enzyme activity is therefore unsure.</text>
</comment>
<feature type="signal peptide" evidence="2">
    <location>
        <begin position="1"/>
        <end position="34"/>
    </location>
</feature>
<feature type="chain" id="PRO_0000372831" description="Probable inactive purple acid phosphatase 29">
    <location>
        <begin position="35"/>
        <end position="389"/>
    </location>
</feature>
<feature type="binding site" evidence="1">
    <location>
        <position position="136"/>
    </location>
    <ligand>
        <name>substrate</name>
    </ligand>
</feature>
<feature type="binding site" evidence="1">
    <location>
        <position position="136"/>
    </location>
    <ligand>
        <name>Zn(2+)</name>
        <dbReference type="ChEBI" id="CHEBI:29105"/>
    </ligand>
</feature>
<feature type="binding site" evidence="1">
    <location>
        <begin position="303"/>
        <end position="305"/>
    </location>
    <ligand>
        <name>substrate</name>
    </ligand>
</feature>
<feature type="binding site" evidence="1">
    <location>
        <position position="303"/>
    </location>
    <ligand>
        <name>Zn(2+)</name>
        <dbReference type="ChEBI" id="CHEBI:29105"/>
    </ligand>
</feature>
<feature type="binding site" evidence="1">
    <location>
        <position position="305"/>
    </location>
    <ligand>
        <name>Fe cation</name>
        <dbReference type="ChEBI" id="CHEBI:24875"/>
    </ligand>
</feature>
<feature type="glycosylation site" description="N-linked (GlcNAc...) asparagine" evidence="2">
    <location>
        <position position="80"/>
    </location>
</feature>
<feature type="glycosylation site" description="N-linked (GlcNAc...) asparagine" evidence="2">
    <location>
        <position position="191"/>
    </location>
</feature>
<feature type="glycosylation site" description="N-linked (GlcNAc...) asparagine" evidence="2">
    <location>
        <position position="267"/>
    </location>
</feature>
<feature type="glycosylation site" description="N-linked (GlcNAc...) asparagine" evidence="2">
    <location>
        <position position="380"/>
    </location>
</feature>
<organism>
    <name type="scientific">Arabidopsis thaliana</name>
    <name type="common">Mouse-ear cress</name>
    <dbReference type="NCBI Taxonomy" id="3702"/>
    <lineage>
        <taxon>Eukaryota</taxon>
        <taxon>Viridiplantae</taxon>
        <taxon>Streptophyta</taxon>
        <taxon>Embryophyta</taxon>
        <taxon>Tracheophyta</taxon>
        <taxon>Spermatophyta</taxon>
        <taxon>Magnoliopsida</taxon>
        <taxon>eudicotyledons</taxon>
        <taxon>Gunneridae</taxon>
        <taxon>Pentapetalae</taxon>
        <taxon>rosids</taxon>
        <taxon>malvids</taxon>
        <taxon>Brassicales</taxon>
        <taxon>Brassicaceae</taxon>
        <taxon>Camelineae</taxon>
        <taxon>Arabidopsis</taxon>
    </lineage>
</organism>
<reference key="1">
    <citation type="journal article" date="2005" name="Plant Mol. Biol.">
        <title>Expression patterns of purple acid phosphatase genes in Arabidopsis organs and functional analysis of AtPAP23 predominantly transcribed in flower.</title>
        <authorList>
            <person name="Zhu H."/>
            <person name="Qian W."/>
            <person name="Lu X."/>
            <person name="Li D."/>
            <person name="Liu X."/>
            <person name="Liu K."/>
            <person name="Wang D."/>
        </authorList>
    </citation>
    <scope>NUCLEOTIDE SEQUENCE [MRNA]</scope>
    <scope>TISSUE SPECIFICITY</scope>
    <source>
        <strain>cv. Columbia</strain>
    </source>
</reference>
<reference key="2">
    <citation type="journal article" date="1997" name="DNA Res.">
        <title>Structural analysis of Arabidopsis thaliana chromosome 5. III. Sequence features of the regions of 1,191,918 bp covered by seventeen physically assigned P1 clones.</title>
        <authorList>
            <person name="Nakamura Y."/>
            <person name="Sato S."/>
            <person name="Kaneko T."/>
            <person name="Kotani H."/>
            <person name="Asamizu E."/>
            <person name="Miyajima N."/>
            <person name="Tabata S."/>
        </authorList>
    </citation>
    <scope>NUCLEOTIDE SEQUENCE [LARGE SCALE GENOMIC DNA]</scope>
    <source>
        <strain>cv. Columbia</strain>
    </source>
</reference>
<reference key="3">
    <citation type="journal article" date="2017" name="Plant J.">
        <title>Araport11: a complete reannotation of the Arabidopsis thaliana reference genome.</title>
        <authorList>
            <person name="Cheng C.Y."/>
            <person name="Krishnakumar V."/>
            <person name="Chan A.P."/>
            <person name="Thibaud-Nissen F."/>
            <person name="Schobel S."/>
            <person name="Town C.D."/>
        </authorList>
    </citation>
    <scope>GENOME REANNOTATION</scope>
    <source>
        <strain>cv. Columbia</strain>
    </source>
</reference>
<reference key="4">
    <citation type="submission" date="2004-07" db="EMBL/GenBank/DDBJ databases">
        <title>Arabidopsis ORF clones.</title>
        <authorList>
            <person name="Shinn P."/>
            <person name="Chen H."/>
            <person name="Cheuk R.F."/>
            <person name="Kim C.J."/>
            <person name="Ecker J.R."/>
        </authorList>
    </citation>
    <scope>NUCLEOTIDE SEQUENCE [LARGE SCALE MRNA]</scope>
    <source>
        <strain>cv. Columbia</strain>
    </source>
</reference>
<reference key="5">
    <citation type="journal article" date="2002" name="J. Biol. Chem.">
        <title>Purple acid phosphatases of Arabidopsis thaliana. Comparative analysis and differential regulation by phosphate deprivation.</title>
        <authorList>
            <person name="Li D."/>
            <person name="Zhu H."/>
            <person name="Liu K."/>
            <person name="Liu X."/>
            <person name="Leggewie G."/>
            <person name="Udvardi M."/>
            <person name="Wang D."/>
        </authorList>
    </citation>
    <scope>GENE FAMILY</scope>
    <scope>NOMENCLATURE</scope>
</reference>
<evidence type="ECO:0000250" key="1"/>
<evidence type="ECO:0000255" key="2"/>
<evidence type="ECO:0000269" key="3">
    <source>
    </source>
</evidence>
<evidence type="ECO:0000305" key="4"/>
<dbReference type="EMBL" id="AY882861">
    <property type="protein sequence ID" value="AAW80661.1"/>
    <property type="molecule type" value="mRNA"/>
</dbReference>
<dbReference type="EMBL" id="AB008265">
    <property type="protein sequence ID" value="BAB10556.1"/>
    <property type="molecule type" value="Genomic_DNA"/>
</dbReference>
<dbReference type="EMBL" id="CP002688">
    <property type="protein sequence ID" value="AED97710.1"/>
    <property type="molecule type" value="Genomic_DNA"/>
</dbReference>
<dbReference type="EMBL" id="BT014894">
    <property type="protein sequence ID" value="AAT44970.1"/>
    <property type="molecule type" value="mRNA"/>
</dbReference>
<dbReference type="EMBL" id="BT015022">
    <property type="protein sequence ID" value="AAT70473.1"/>
    <property type="molecule type" value="mRNA"/>
</dbReference>
<dbReference type="RefSeq" id="NP_201119.1">
    <property type="nucleotide sequence ID" value="NM_125709.5"/>
</dbReference>
<dbReference type="FunCoup" id="Q9FMK9">
    <property type="interactions" value="217"/>
</dbReference>
<dbReference type="STRING" id="3702.Q9FMK9"/>
<dbReference type="GlyCosmos" id="Q9FMK9">
    <property type="glycosylation" value="4 sites, No reported glycans"/>
</dbReference>
<dbReference type="GlyGen" id="Q9FMK9">
    <property type="glycosylation" value="4 sites"/>
</dbReference>
<dbReference type="PaxDb" id="3702-AT5G63140.1"/>
<dbReference type="ProteomicsDB" id="249030"/>
<dbReference type="EnsemblPlants" id="AT5G63140.1">
    <property type="protein sequence ID" value="AT5G63140.1"/>
    <property type="gene ID" value="AT5G63140"/>
</dbReference>
<dbReference type="GeneID" id="836435"/>
<dbReference type="Gramene" id="AT5G63140.1">
    <property type="protein sequence ID" value="AT5G63140.1"/>
    <property type="gene ID" value="AT5G63140"/>
</dbReference>
<dbReference type="KEGG" id="ath:AT5G63140"/>
<dbReference type="Araport" id="AT5G63140"/>
<dbReference type="TAIR" id="AT5G63140">
    <property type="gene designation" value="PAP29"/>
</dbReference>
<dbReference type="eggNOG" id="KOG1432">
    <property type="taxonomic scope" value="Eukaryota"/>
</dbReference>
<dbReference type="HOGENOM" id="CLU_019692_0_0_1"/>
<dbReference type="InParanoid" id="Q9FMK9"/>
<dbReference type="OMA" id="HIVPMEY"/>
<dbReference type="OrthoDB" id="783096at2759"/>
<dbReference type="PhylomeDB" id="Q9FMK9"/>
<dbReference type="PRO" id="PR:Q9FMK9"/>
<dbReference type="Proteomes" id="UP000006548">
    <property type="component" value="Chromosome 5"/>
</dbReference>
<dbReference type="ExpressionAtlas" id="Q9FMK9">
    <property type="expression patterns" value="baseline and differential"/>
</dbReference>
<dbReference type="GO" id="GO:0005576">
    <property type="term" value="C:extracellular region"/>
    <property type="evidence" value="ECO:0007669"/>
    <property type="project" value="UniProtKB-SubCell"/>
</dbReference>
<dbReference type="GO" id="GO:0003993">
    <property type="term" value="F:acid phosphatase activity"/>
    <property type="evidence" value="ECO:0000250"/>
    <property type="project" value="TAIR"/>
</dbReference>
<dbReference type="GO" id="GO:0046872">
    <property type="term" value="F:metal ion binding"/>
    <property type="evidence" value="ECO:0007669"/>
    <property type="project" value="UniProtKB-KW"/>
</dbReference>
<dbReference type="CDD" id="cd07383">
    <property type="entry name" value="MPP_Dcr2"/>
    <property type="match status" value="1"/>
</dbReference>
<dbReference type="FunFam" id="3.60.21.10:FF:000038">
    <property type="entry name" value="Probable inactive purple acid phosphatase 29"/>
    <property type="match status" value="1"/>
</dbReference>
<dbReference type="Gene3D" id="3.60.21.10">
    <property type="match status" value="1"/>
</dbReference>
<dbReference type="InterPro" id="IPR004843">
    <property type="entry name" value="Calcineurin-like_PHP_ApaH"/>
</dbReference>
<dbReference type="InterPro" id="IPR029052">
    <property type="entry name" value="Metallo-depent_PP-like"/>
</dbReference>
<dbReference type="InterPro" id="IPR011230">
    <property type="entry name" value="PAP14/16/28/29"/>
</dbReference>
<dbReference type="PANTHER" id="PTHR32440:SF0">
    <property type="entry name" value="PHOSPHATASE DCR2-RELATED"/>
    <property type="match status" value="1"/>
</dbReference>
<dbReference type="PANTHER" id="PTHR32440">
    <property type="entry name" value="PHOSPHATASE DCR2-RELATED-RELATED"/>
    <property type="match status" value="1"/>
</dbReference>
<dbReference type="Pfam" id="PF00149">
    <property type="entry name" value="Metallophos"/>
    <property type="match status" value="1"/>
</dbReference>
<dbReference type="PIRSF" id="PIRSF030250">
    <property type="entry name" value="Ptase_At2g46880"/>
    <property type="match status" value="1"/>
</dbReference>
<dbReference type="SUPFAM" id="SSF56300">
    <property type="entry name" value="Metallo-dependent phosphatases"/>
    <property type="match status" value="1"/>
</dbReference>
<protein>
    <recommendedName>
        <fullName>Probable inactive purple acid phosphatase 29</fullName>
    </recommendedName>
</protein>